<reference key="1">
    <citation type="journal article" date="2002" name="Nature">
        <title>The genome sequence of Schizosaccharomyces pombe.</title>
        <authorList>
            <person name="Wood V."/>
            <person name="Gwilliam R."/>
            <person name="Rajandream M.A."/>
            <person name="Lyne M.H."/>
            <person name="Lyne R."/>
            <person name="Stewart A."/>
            <person name="Sgouros J.G."/>
            <person name="Peat N."/>
            <person name="Hayles J."/>
            <person name="Baker S.G."/>
            <person name="Basham D."/>
            <person name="Bowman S."/>
            <person name="Brooks K."/>
            <person name="Brown D."/>
            <person name="Brown S."/>
            <person name="Chillingworth T."/>
            <person name="Churcher C.M."/>
            <person name="Collins M."/>
            <person name="Connor R."/>
            <person name="Cronin A."/>
            <person name="Davis P."/>
            <person name="Feltwell T."/>
            <person name="Fraser A."/>
            <person name="Gentles S."/>
            <person name="Goble A."/>
            <person name="Hamlin N."/>
            <person name="Harris D.E."/>
            <person name="Hidalgo J."/>
            <person name="Hodgson G."/>
            <person name="Holroyd S."/>
            <person name="Hornsby T."/>
            <person name="Howarth S."/>
            <person name="Huckle E.J."/>
            <person name="Hunt S."/>
            <person name="Jagels K."/>
            <person name="James K.D."/>
            <person name="Jones L."/>
            <person name="Jones M."/>
            <person name="Leather S."/>
            <person name="McDonald S."/>
            <person name="McLean J."/>
            <person name="Mooney P."/>
            <person name="Moule S."/>
            <person name="Mungall K.L."/>
            <person name="Murphy L.D."/>
            <person name="Niblett D."/>
            <person name="Odell C."/>
            <person name="Oliver K."/>
            <person name="O'Neil S."/>
            <person name="Pearson D."/>
            <person name="Quail M.A."/>
            <person name="Rabbinowitsch E."/>
            <person name="Rutherford K.M."/>
            <person name="Rutter S."/>
            <person name="Saunders D."/>
            <person name="Seeger K."/>
            <person name="Sharp S."/>
            <person name="Skelton J."/>
            <person name="Simmonds M.N."/>
            <person name="Squares R."/>
            <person name="Squares S."/>
            <person name="Stevens K."/>
            <person name="Taylor K."/>
            <person name="Taylor R.G."/>
            <person name="Tivey A."/>
            <person name="Walsh S.V."/>
            <person name="Warren T."/>
            <person name="Whitehead S."/>
            <person name="Woodward J.R."/>
            <person name="Volckaert G."/>
            <person name="Aert R."/>
            <person name="Robben J."/>
            <person name="Grymonprez B."/>
            <person name="Weltjens I."/>
            <person name="Vanstreels E."/>
            <person name="Rieger M."/>
            <person name="Schaefer M."/>
            <person name="Mueller-Auer S."/>
            <person name="Gabel C."/>
            <person name="Fuchs M."/>
            <person name="Duesterhoeft A."/>
            <person name="Fritzc C."/>
            <person name="Holzer E."/>
            <person name="Moestl D."/>
            <person name="Hilbert H."/>
            <person name="Borzym K."/>
            <person name="Langer I."/>
            <person name="Beck A."/>
            <person name="Lehrach H."/>
            <person name="Reinhardt R."/>
            <person name="Pohl T.M."/>
            <person name="Eger P."/>
            <person name="Zimmermann W."/>
            <person name="Wedler H."/>
            <person name="Wambutt R."/>
            <person name="Purnelle B."/>
            <person name="Goffeau A."/>
            <person name="Cadieu E."/>
            <person name="Dreano S."/>
            <person name="Gloux S."/>
            <person name="Lelaure V."/>
            <person name="Mottier S."/>
            <person name="Galibert F."/>
            <person name="Aves S.J."/>
            <person name="Xiang Z."/>
            <person name="Hunt C."/>
            <person name="Moore K."/>
            <person name="Hurst S.M."/>
            <person name="Lucas M."/>
            <person name="Rochet M."/>
            <person name="Gaillardin C."/>
            <person name="Tallada V.A."/>
            <person name="Garzon A."/>
            <person name="Thode G."/>
            <person name="Daga R.R."/>
            <person name="Cruzado L."/>
            <person name="Jimenez J."/>
            <person name="Sanchez M."/>
            <person name="del Rey F."/>
            <person name="Benito J."/>
            <person name="Dominguez A."/>
            <person name="Revuelta J.L."/>
            <person name="Moreno S."/>
            <person name="Armstrong J."/>
            <person name="Forsburg S.L."/>
            <person name="Cerutti L."/>
            <person name="Lowe T."/>
            <person name="McCombie W.R."/>
            <person name="Paulsen I."/>
            <person name="Potashkin J."/>
            <person name="Shpakovski G.V."/>
            <person name="Ussery D."/>
            <person name="Barrell B.G."/>
            <person name="Nurse P."/>
        </authorList>
    </citation>
    <scope>NUCLEOTIDE SEQUENCE [LARGE SCALE GENOMIC DNA]</scope>
    <source>
        <strain>972 / ATCC 24843</strain>
    </source>
</reference>
<reference key="2">
    <citation type="journal article" date="2006" name="Nat. Biotechnol.">
        <title>ORFeome cloning and global analysis of protein localization in the fission yeast Schizosaccharomyces pombe.</title>
        <authorList>
            <person name="Matsuyama A."/>
            <person name="Arai R."/>
            <person name="Yashiroda Y."/>
            <person name="Shirai A."/>
            <person name="Kamata A."/>
            <person name="Sekido S."/>
            <person name="Kobayashi Y."/>
            <person name="Hashimoto A."/>
            <person name="Hamamoto M."/>
            <person name="Hiraoka Y."/>
            <person name="Horinouchi S."/>
            <person name="Yoshida M."/>
        </authorList>
    </citation>
    <scope>SUBCELLULAR LOCATION [LARGE SCALE ANALYSIS]</scope>
</reference>
<organism>
    <name type="scientific">Schizosaccharomyces pombe (strain 972 / ATCC 24843)</name>
    <name type="common">Fission yeast</name>
    <dbReference type="NCBI Taxonomy" id="284812"/>
    <lineage>
        <taxon>Eukaryota</taxon>
        <taxon>Fungi</taxon>
        <taxon>Dikarya</taxon>
        <taxon>Ascomycota</taxon>
        <taxon>Taphrinomycotina</taxon>
        <taxon>Schizosaccharomycetes</taxon>
        <taxon>Schizosaccharomycetales</taxon>
        <taxon>Schizosaccharomycetaceae</taxon>
        <taxon>Schizosaccharomyces</taxon>
    </lineage>
</organism>
<sequence>MLIVMNRGCRLVSRIPLGFRRLKRNPNPGLRNILCRRYSPLALSKEVTEALKNNVPVVALESTIITHGMPYPQNEELAIQVESKVRSMGAVPATIALLNGQCTIGLEQFQLSELAKSGETAYKVSRRDLSYVASQRLNGGTTVAATMILARAAGIDVFATGGIGGVHRGAENSMDISADLIELGRTRVAVVSAGVKSILDIGRTLEVLETQGVPVVTLGPPKSAFPAFFSRESKFQSPLSLETPQLIANMLFSNIQLGQECGTLVAIPTPHHCSIDYEKMEALIETCLQRSVQLGITGKNVTPWLLGELLRESKGKSLNTNIDLVLNNAEKASLIAKELAVLKEKSSFFPTNTGNTFETKPVKQDFFYGKVSDKGVSSSKKKITETTSKPAEVVCVGSVSIDSVLKLDNPLTSKFLGTSHPCHSEQAFGGVAHNMALASSLMGASTKLVSCVGTKSVPTSSIKEYLTKSSLQHTIVEKSNFTSCSYTAINDCNGNLLLAGADMAIMENLSYSEIKDDLNDAKYICFDGNISPSLMLDITTSKSSKQRVVFEPTSGPKTLKILKVLSVASIDFITPNKFELDVLFQAMKDGNFFENESWWQKLNSFGITSSFYNEIERFTKSTGIEEITENGILQKCFHLLPFIKNIIVKLGPNGALLISSEKLQGVNSNSASLFTPGNVTVKYYPVPKVIATPVNASGTGDTFIGTFTALLSKGWGMDDAIDTAQKAAGLTLQCNFSVNPEIKTLLK</sequence>
<comment type="function">
    <text evidence="1 2">Bifunctional enzyme that catalyzes the phosphorylation of pseudouridine to pseudouridine 5'-phosphate (PsiMP), and the reversible cleavage of pseudouridine 5'-phosphate to ribose 5-phosphate and uracil. Is involved in a pseudouridine degradation pathway.</text>
</comment>
<comment type="catalytic activity">
    <reaction evidence="2">
        <text>D-ribose 5-phosphate + uracil = psi-UMP + H2O</text>
        <dbReference type="Rhea" id="RHEA:18337"/>
        <dbReference type="ChEBI" id="CHEBI:15377"/>
        <dbReference type="ChEBI" id="CHEBI:17568"/>
        <dbReference type="ChEBI" id="CHEBI:58380"/>
        <dbReference type="ChEBI" id="CHEBI:78346"/>
        <dbReference type="EC" id="4.2.1.70"/>
    </reaction>
</comment>
<comment type="catalytic activity">
    <reaction evidence="1">
        <text>pseudouridine + ATP = psi-UMP + ADP + H(+)</text>
        <dbReference type="Rhea" id="RHEA:22448"/>
        <dbReference type="ChEBI" id="CHEBI:15378"/>
        <dbReference type="ChEBI" id="CHEBI:17802"/>
        <dbReference type="ChEBI" id="CHEBI:30616"/>
        <dbReference type="ChEBI" id="CHEBI:58380"/>
        <dbReference type="ChEBI" id="CHEBI:456216"/>
        <dbReference type="EC" id="2.7.1.83"/>
    </reaction>
</comment>
<comment type="cofactor">
    <cofactor evidence="2">
        <name>Mn(2+)</name>
        <dbReference type="ChEBI" id="CHEBI:29035"/>
    </cofactor>
</comment>
<comment type="subcellular location">
    <subcellularLocation>
        <location evidence="3">Cytoplasm</location>
    </subcellularLocation>
</comment>
<comment type="similarity">
    <text evidence="4">In the N-terminal section; belongs to the pseudouridine-5'-phosphate glycosidase family.</text>
</comment>
<comment type="similarity">
    <text evidence="4">In the C-terminal section; belongs to the carbohydrate kinase PfkB family.</text>
</comment>
<feature type="chain" id="PRO_0000362159" description="Pseudouridine-metabolizing bifunctional protein C1861.05">
    <location>
        <begin position="1"/>
        <end position="747"/>
    </location>
</feature>
<feature type="region of interest" description="Pseudouridine-5'-phosphate glycosidase">
    <location>
        <begin position="1"/>
        <end position="379"/>
    </location>
</feature>
<feature type="region of interest" description="Pseudouridine kinase">
    <location>
        <begin position="380"/>
        <end position="747"/>
    </location>
</feature>
<feature type="active site" description="Proton donor; for PsiMP glycosidase activity" evidence="2">
    <location>
        <position position="61"/>
    </location>
</feature>
<feature type="active site" description="Nucleophile; for PsiMP glycosidase activity" evidence="2">
    <location>
        <position position="196"/>
    </location>
</feature>
<feature type="binding site" evidence="2">
    <location>
        <position position="123"/>
    </location>
    <ligand>
        <name>substrate</name>
    </ligand>
</feature>
<feature type="binding site" evidence="2">
    <location>
        <position position="143"/>
    </location>
    <ligand>
        <name>substrate</name>
    </ligand>
</feature>
<feature type="binding site" evidence="2">
    <location>
        <position position="175"/>
    </location>
    <ligand>
        <name>Mn(2+)</name>
        <dbReference type="ChEBI" id="CHEBI:29035"/>
    </ligand>
</feature>
<feature type="binding site" evidence="2">
    <location>
        <begin position="177"/>
        <end position="179"/>
    </location>
    <ligand>
        <name>substrate</name>
    </ligand>
</feature>
<keyword id="KW-0067">ATP-binding</keyword>
<keyword id="KW-0963">Cytoplasm</keyword>
<keyword id="KW-0326">Glycosidase</keyword>
<keyword id="KW-0378">Hydrolase</keyword>
<keyword id="KW-0418">Kinase</keyword>
<keyword id="KW-0456">Lyase</keyword>
<keyword id="KW-0464">Manganese</keyword>
<keyword id="KW-0479">Metal-binding</keyword>
<keyword id="KW-0547">Nucleotide-binding</keyword>
<keyword id="KW-1185">Reference proteome</keyword>
<keyword id="KW-0808">Transferase</keyword>
<protein>
    <recommendedName>
        <fullName>Pseudouridine-metabolizing bifunctional protein C1861.05</fullName>
    </recommendedName>
    <domain>
        <recommendedName>
            <fullName evidence="2">Pseudouridine-5'-phosphate glycosidase</fullName>
            <shortName evidence="2">PsiMP glycosidase</shortName>
            <ecNumber evidence="2">4.2.1.70</ecNumber>
        </recommendedName>
    </domain>
    <domain>
        <recommendedName>
            <fullName evidence="1">Pseudouridine kinase</fullName>
            <ecNumber evidence="1">2.7.1.83</ecNumber>
        </recommendedName>
    </domain>
</protein>
<evidence type="ECO:0000250" key="1">
    <source>
        <dbReference type="UniProtKB" id="P30235"/>
    </source>
</evidence>
<evidence type="ECO:0000250" key="2">
    <source>
        <dbReference type="UniProtKB" id="P33025"/>
    </source>
</evidence>
<evidence type="ECO:0000269" key="3">
    <source>
    </source>
</evidence>
<evidence type="ECO:0000305" key="4"/>
<gene>
    <name type="ORF">SPBC1861.05</name>
</gene>
<proteinExistence type="inferred from homology"/>
<name>YOW5_SCHPO</name>
<accession>Q9USY1</accession>
<dbReference type="EC" id="4.2.1.70" evidence="2"/>
<dbReference type="EC" id="2.7.1.83" evidence="1"/>
<dbReference type="EMBL" id="CU329671">
    <property type="protein sequence ID" value="CAB52741.1"/>
    <property type="molecule type" value="Genomic_DNA"/>
</dbReference>
<dbReference type="PIR" id="T39744">
    <property type="entry name" value="T39744"/>
</dbReference>
<dbReference type="RefSeq" id="NP_596722.1">
    <property type="nucleotide sequence ID" value="NM_001022647.2"/>
</dbReference>
<dbReference type="SMR" id="Q9USY1"/>
<dbReference type="BioGRID" id="276314">
    <property type="interactions" value="46"/>
</dbReference>
<dbReference type="FunCoup" id="Q9USY1">
    <property type="interactions" value="25"/>
</dbReference>
<dbReference type="STRING" id="284812.Q9USY1"/>
<dbReference type="PaxDb" id="4896-SPBC1861.05.1"/>
<dbReference type="EnsemblFungi" id="SPBC1861.05.1">
    <property type="protein sequence ID" value="SPBC1861.05.1:pep"/>
    <property type="gene ID" value="SPBC1861.05"/>
</dbReference>
<dbReference type="KEGG" id="spo:2539763"/>
<dbReference type="PomBase" id="SPBC1861.05"/>
<dbReference type="VEuPathDB" id="FungiDB:SPBC1861.05"/>
<dbReference type="eggNOG" id="KOG3009">
    <property type="taxonomic scope" value="Eukaryota"/>
</dbReference>
<dbReference type="HOGENOM" id="CLU_012201_3_0_1"/>
<dbReference type="InParanoid" id="Q9USY1"/>
<dbReference type="OMA" id="FNCIIAT"/>
<dbReference type="PhylomeDB" id="Q9USY1"/>
<dbReference type="PRO" id="PR:Q9USY1"/>
<dbReference type="Proteomes" id="UP000002485">
    <property type="component" value="Chromosome II"/>
</dbReference>
<dbReference type="GO" id="GO:0005737">
    <property type="term" value="C:cytoplasm"/>
    <property type="evidence" value="ECO:0007005"/>
    <property type="project" value="PomBase"/>
</dbReference>
<dbReference type="GO" id="GO:0005524">
    <property type="term" value="F:ATP binding"/>
    <property type="evidence" value="ECO:0007669"/>
    <property type="project" value="UniProtKB-KW"/>
</dbReference>
<dbReference type="GO" id="GO:0016798">
    <property type="term" value="F:hydrolase activity, acting on glycosyl bonds"/>
    <property type="evidence" value="ECO:0007669"/>
    <property type="project" value="UniProtKB-KW"/>
</dbReference>
<dbReference type="GO" id="GO:0046872">
    <property type="term" value="F:metal ion binding"/>
    <property type="evidence" value="ECO:0007669"/>
    <property type="project" value="UniProtKB-KW"/>
</dbReference>
<dbReference type="GO" id="GO:0050225">
    <property type="term" value="F:pseudouridine kinase activity"/>
    <property type="evidence" value="ECO:0000250"/>
    <property type="project" value="PomBase"/>
</dbReference>
<dbReference type="GO" id="GO:0004730">
    <property type="term" value="F:pseudouridylate synthase activity"/>
    <property type="evidence" value="ECO:0000318"/>
    <property type="project" value="GO_Central"/>
</dbReference>
<dbReference type="GO" id="GO:0006213">
    <property type="term" value="P:pyrimidine nucleoside metabolic process"/>
    <property type="evidence" value="ECO:0000305"/>
    <property type="project" value="PomBase"/>
</dbReference>
<dbReference type="CDD" id="cd01941">
    <property type="entry name" value="YeiC_kinase_like"/>
    <property type="match status" value="1"/>
</dbReference>
<dbReference type="Gene3D" id="3.40.1190.20">
    <property type="match status" value="1"/>
</dbReference>
<dbReference type="Gene3D" id="3.40.1790.10">
    <property type="entry name" value="Indigoidine synthase domain"/>
    <property type="match status" value="1"/>
</dbReference>
<dbReference type="HAMAP" id="MF_01876">
    <property type="entry name" value="PsiMP_glycosidase"/>
    <property type="match status" value="1"/>
</dbReference>
<dbReference type="InterPro" id="IPR002173">
    <property type="entry name" value="Carboh/pur_kinase_PfkB_CS"/>
</dbReference>
<dbReference type="InterPro" id="IPR022830">
    <property type="entry name" value="Indigdn_synthA-like"/>
</dbReference>
<dbReference type="InterPro" id="IPR011611">
    <property type="entry name" value="PfkB_dom"/>
</dbReference>
<dbReference type="InterPro" id="IPR007342">
    <property type="entry name" value="PsuG"/>
</dbReference>
<dbReference type="InterPro" id="IPR029056">
    <property type="entry name" value="Ribokinase-like"/>
</dbReference>
<dbReference type="PANTHER" id="PTHR42909:SF1">
    <property type="entry name" value="CARBOHYDRATE KINASE PFKB DOMAIN-CONTAINING PROTEIN"/>
    <property type="match status" value="1"/>
</dbReference>
<dbReference type="PANTHER" id="PTHR42909">
    <property type="entry name" value="ZGC:136858"/>
    <property type="match status" value="1"/>
</dbReference>
<dbReference type="Pfam" id="PF04227">
    <property type="entry name" value="Indigoidine_A"/>
    <property type="match status" value="1"/>
</dbReference>
<dbReference type="Pfam" id="PF00294">
    <property type="entry name" value="PfkB"/>
    <property type="match status" value="2"/>
</dbReference>
<dbReference type="SUPFAM" id="SSF110581">
    <property type="entry name" value="Indigoidine synthase A-like"/>
    <property type="match status" value="1"/>
</dbReference>
<dbReference type="SUPFAM" id="SSF53613">
    <property type="entry name" value="Ribokinase-like"/>
    <property type="match status" value="1"/>
</dbReference>
<dbReference type="PROSITE" id="PS00583">
    <property type="entry name" value="PFKB_KINASES_1"/>
    <property type="match status" value="1"/>
</dbReference>